<sequence>MNIHEYQAKEVLRKFGVATLKGKLAHSPEEAVAAAKEIGGSVWVVKAQIHAGGRGKGGGVKVAKSLDEVSEFTKKMIGMTLVTHQTGPEGKVVQKVFIEQGCNIAKEYYVACLIDRATGRAAMMASSEGGMDIEEVAEHNPDAIKKVDIDPTVGLMPFQARELAFQIGMEPAIVNKAVKFFAGLYNAFVATDCSIAEINPLVVTKEGDVLCLDAKMNFDSNSLFRHPDIVEMRDLNEEEPSEIEASKFDLAFIKLDGNIGCLVNGAGLAMATLDIIKLHGAEPANFLDVGGGANKEKVTEAFKIILKDKNVKGILVNIFGGIMKCDIIAEGVIAASKELGLKVPLVVRLEGTNVELGKKMLKESGLNITPADNLTDAAKKIVAAIKG</sequence>
<comment type="function">
    <text evidence="1">Succinyl-CoA synthetase functions in the citric acid cycle (TCA), coupling the hydrolysis of succinyl-CoA to the synthesis of either ATP or GTP and thus represents the only step of substrate-level phosphorylation in the TCA. The beta subunit provides nucleotide specificity of the enzyme and binds the substrate succinate, while the binding sites for coenzyme A and phosphate are found in the alpha subunit.</text>
</comment>
<comment type="catalytic activity">
    <reaction evidence="1">
        <text>succinate + ATP + CoA = succinyl-CoA + ADP + phosphate</text>
        <dbReference type="Rhea" id="RHEA:17661"/>
        <dbReference type="ChEBI" id="CHEBI:30031"/>
        <dbReference type="ChEBI" id="CHEBI:30616"/>
        <dbReference type="ChEBI" id="CHEBI:43474"/>
        <dbReference type="ChEBI" id="CHEBI:57287"/>
        <dbReference type="ChEBI" id="CHEBI:57292"/>
        <dbReference type="ChEBI" id="CHEBI:456216"/>
        <dbReference type="EC" id="6.2.1.5"/>
    </reaction>
    <physiologicalReaction direction="right-to-left" evidence="1">
        <dbReference type="Rhea" id="RHEA:17663"/>
    </physiologicalReaction>
</comment>
<comment type="catalytic activity">
    <reaction evidence="1">
        <text>GTP + succinate + CoA = succinyl-CoA + GDP + phosphate</text>
        <dbReference type="Rhea" id="RHEA:22120"/>
        <dbReference type="ChEBI" id="CHEBI:30031"/>
        <dbReference type="ChEBI" id="CHEBI:37565"/>
        <dbReference type="ChEBI" id="CHEBI:43474"/>
        <dbReference type="ChEBI" id="CHEBI:57287"/>
        <dbReference type="ChEBI" id="CHEBI:57292"/>
        <dbReference type="ChEBI" id="CHEBI:58189"/>
    </reaction>
    <physiologicalReaction direction="right-to-left" evidence="1">
        <dbReference type="Rhea" id="RHEA:22122"/>
    </physiologicalReaction>
</comment>
<comment type="cofactor">
    <cofactor evidence="1">
        <name>Mg(2+)</name>
        <dbReference type="ChEBI" id="CHEBI:18420"/>
    </cofactor>
    <text evidence="1">Binds 1 Mg(2+) ion per subunit.</text>
</comment>
<comment type="pathway">
    <text evidence="1">Carbohydrate metabolism; tricarboxylic acid cycle; succinate from succinyl-CoA (ligase route): step 1/1.</text>
</comment>
<comment type="subunit">
    <text evidence="1">Heterotetramer of two alpha and two beta subunits.</text>
</comment>
<comment type="similarity">
    <text evidence="1">Belongs to the succinate/malate CoA ligase beta subunit family.</text>
</comment>
<dbReference type="EC" id="6.2.1.5" evidence="1"/>
<dbReference type="EMBL" id="BX842656">
    <property type="protein sequence ID" value="CAE81168.1"/>
    <property type="molecule type" value="Genomic_DNA"/>
</dbReference>
<dbReference type="RefSeq" id="WP_011166111.1">
    <property type="nucleotide sequence ID" value="NC_005363.1"/>
</dbReference>
<dbReference type="SMR" id="Q6MGW1"/>
<dbReference type="STRING" id="264462.Bd3810"/>
<dbReference type="GeneID" id="93014580"/>
<dbReference type="KEGG" id="bba:Bd3810"/>
<dbReference type="eggNOG" id="COG0045">
    <property type="taxonomic scope" value="Bacteria"/>
</dbReference>
<dbReference type="HOGENOM" id="CLU_037430_0_2_7"/>
<dbReference type="UniPathway" id="UPA00223">
    <property type="reaction ID" value="UER00999"/>
</dbReference>
<dbReference type="Proteomes" id="UP000008080">
    <property type="component" value="Chromosome"/>
</dbReference>
<dbReference type="GO" id="GO:0005829">
    <property type="term" value="C:cytosol"/>
    <property type="evidence" value="ECO:0007669"/>
    <property type="project" value="TreeGrafter"/>
</dbReference>
<dbReference type="GO" id="GO:0042709">
    <property type="term" value="C:succinate-CoA ligase complex"/>
    <property type="evidence" value="ECO:0007669"/>
    <property type="project" value="TreeGrafter"/>
</dbReference>
<dbReference type="GO" id="GO:0005524">
    <property type="term" value="F:ATP binding"/>
    <property type="evidence" value="ECO:0007669"/>
    <property type="project" value="UniProtKB-UniRule"/>
</dbReference>
<dbReference type="GO" id="GO:0000287">
    <property type="term" value="F:magnesium ion binding"/>
    <property type="evidence" value="ECO:0007669"/>
    <property type="project" value="UniProtKB-UniRule"/>
</dbReference>
<dbReference type="GO" id="GO:0004775">
    <property type="term" value="F:succinate-CoA ligase (ADP-forming) activity"/>
    <property type="evidence" value="ECO:0007669"/>
    <property type="project" value="UniProtKB-UniRule"/>
</dbReference>
<dbReference type="GO" id="GO:0004776">
    <property type="term" value="F:succinate-CoA ligase (GDP-forming) activity"/>
    <property type="evidence" value="ECO:0007669"/>
    <property type="project" value="RHEA"/>
</dbReference>
<dbReference type="GO" id="GO:0006104">
    <property type="term" value="P:succinyl-CoA metabolic process"/>
    <property type="evidence" value="ECO:0007669"/>
    <property type="project" value="TreeGrafter"/>
</dbReference>
<dbReference type="GO" id="GO:0006099">
    <property type="term" value="P:tricarboxylic acid cycle"/>
    <property type="evidence" value="ECO:0007669"/>
    <property type="project" value="UniProtKB-UniRule"/>
</dbReference>
<dbReference type="FunFam" id="3.30.1490.20:FF:000002">
    <property type="entry name" value="Succinate--CoA ligase [ADP-forming] subunit beta"/>
    <property type="match status" value="1"/>
</dbReference>
<dbReference type="FunFam" id="3.30.470.20:FF:000002">
    <property type="entry name" value="Succinate--CoA ligase [ADP-forming] subunit beta"/>
    <property type="match status" value="1"/>
</dbReference>
<dbReference type="FunFam" id="3.40.50.261:FF:000001">
    <property type="entry name" value="Succinate--CoA ligase [ADP-forming] subunit beta"/>
    <property type="match status" value="1"/>
</dbReference>
<dbReference type="Gene3D" id="3.30.1490.20">
    <property type="entry name" value="ATP-grasp fold, A domain"/>
    <property type="match status" value="1"/>
</dbReference>
<dbReference type="Gene3D" id="3.30.470.20">
    <property type="entry name" value="ATP-grasp fold, B domain"/>
    <property type="match status" value="1"/>
</dbReference>
<dbReference type="Gene3D" id="3.40.50.261">
    <property type="entry name" value="Succinyl-CoA synthetase domains"/>
    <property type="match status" value="1"/>
</dbReference>
<dbReference type="HAMAP" id="MF_00558">
    <property type="entry name" value="Succ_CoA_beta"/>
    <property type="match status" value="1"/>
</dbReference>
<dbReference type="InterPro" id="IPR011761">
    <property type="entry name" value="ATP-grasp"/>
</dbReference>
<dbReference type="InterPro" id="IPR013650">
    <property type="entry name" value="ATP-grasp_succ-CoA_synth-type"/>
</dbReference>
<dbReference type="InterPro" id="IPR013815">
    <property type="entry name" value="ATP_grasp_subdomain_1"/>
</dbReference>
<dbReference type="InterPro" id="IPR017866">
    <property type="entry name" value="Succ-CoA_synthase_bsu_CS"/>
</dbReference>
<dbReference type="InterPro" id="IPR005811">
    <property type="entry name" value="SUCC_ACL_C"/>
</dbReference>
<dbReference type="InterPro" id="IPR005809">
    <property type="entry name" value="Succ_CoA_ligase-like_bsu"/>
</dbReference>
<dbReference type="InterPro" id="IPR016102">
    <property type="entry name" value="Succinyl-CoA_synth-like"/>
</dbReference>
<dbReference type="NCBIfam" id="NF001913">
    <property type="entry name" value="PRK00696.1"/>
    <property type="match status" value="1"/>
</dbReference>
<dbReference type="NCBIfam" id="TIGR01016">
    <property type="entry name" value="sucCoAbeta"/>
    <property type="match status" value="1"/>
</dbReference>
<dbReference type="PANTHER" id="PTHR11815:SF10">
    <property type="entry name" value="SUCCINATE--COA LIGASE [GDP-FORMING] SUBUNIT BETA, MITOCHONDRIAL"/>
    <property type="match status" value="1"/>
</dbReference>
<dbReference type="PANTHER" id="PTHR11815">
    <property type="entry name" value="SUCCINYL-COA SYNTHETASE BETA CHAIN"/>
    <property type="match status" value="1"/>
</dbReference>
<dbReference type="Pfam" id="PF08442">
    <property type="entry name" value="ATP-grasp_2"/>
    <property type="match status" value="1"/>
</dbReference>
<dbReference type="Pfam" id="PF00549">
    <property type="entry name" value="Ligase_CoA"/>
    <property type="match status" value="1"/>
</dbReference>
<dbReference type="PIRSF" id="PIRSF001554">
    <property type="entry name" value="SucCS_beta"/>
    <property type="match status" value="1"/>
</dbReference>
<dbReference type="SUPFAM" id="SSF56059">
    <property type="entry name" value="Glutathione synthetase ATP-binding domain-like"/>
    <property type="match status" value="1"/>
</dbReference>
<dbReference type="SUPFAM" id="SSF52210">
    <property type="entry name" value="Succinyl-CoA synthetase domains"/>
    <property type="match status" value="1"/>
</dbReference>
<dbReference type="PROSITE" id="PS50975">
    <property type="entry name" value="ATP_GRASP"/>
    <property type="match status" value="1"/>
</dbReference>
<dbReference type="PROSITE" id="PS01217">
    <property type="entry name" value="SUCCINYL_COA_LIG_3"/>
    <property type="match status" value="1"/>
</dbReference>
<name>SUCC_BDEBA</name>
<feature type="chain" id="PRO_1000082023" description="Succinate--CoA ligase [ADP-forming] subunit beta">
    <location>
        <begin position="1"/>
        <end position="387"/>
    </location>
</feature>
<feature type="domain" description="ATP-grasp" evidence="1">
    <location>
        <begin position="9"/>
        <end position="244"/>
    </location>
</feature>
<feature type="binding site" evidence="1">
    <location>
        <position position="46"/>
    </location>
    <ligand>
        <name>ATP</name>
        <dbReference type="ChEBI" id="CHEBI:30616"/>
    </ligand>
</feature>
<feature type="binding site" evidence="1">
    <location>
        <begin position="53"/>
        <end position="55"/>
    </location>
    <ligand>
        <name>ATP</name>
        <dbReference type="ChEBI" id="CHEBI:30616"/>
    </ligand>
</feature>
<feature type="binding site" evidence="1">
    <location>
        <position position="99"/>
    </location>
    <ligand>
        <name>ATP</name>
        <dbReference type="ChEBI" id="CHEBI:30616"/>
    </ligand>
</feature>
<feature type="binding site" evidence="1">
    <location>
        <position position="102"/>
    </location>
    <ligand>
        <name>ATP</name>
        <dbReference type="ChEBI" id="CHEBI:30616"/>
    </ligand>
</feature>
<feature type="binding site" evidence="1">
    <location>
        <position position="107"/>
    </location>
    <ligand>
        <name>ATP</name>
        <dbReference type="ChEBI" id="CHEBI:30616"/>
    </ligand>
</feature>
<feature type="binding site" evidence="1">
    <location>
        <position position="199"/>
    </location>
    <ligand>
        <name>Mg(2+)</name>
        <dbReference type="ChEBI" id="CHEBI:18420"/>
    </ligand>
</feature>
<feature type="binding site" evidence="1">
    <location>
        <position position="213"/>
    </location>
    <ligand>
        <name>Mg(2+)</name>
        <dbReference type="ChEBI" id="CHEBI:18420"/>
    </ligand>
</feature>
<feature type="binding site" evidence="1">
    <location>
        <position position="264"/>
    </location>
    <ligand>
        <name>substrate</name>
        <note>ligand shared with subunit alpha</note>
    </ligand>
</feature>
<feature type="binding site" evidence="1">
    <location>
        <begin position="321"/>
        <end position="323"/>
    </location>
    <ligand>
        <name>substrate</name>
        <note>ligand shared with subunit alpha</note>
    </ligand>
</feature>
<protein>
    <recommendedName>
        <fullName evidence="1">Succinate--CoA ligase [ADP-forming] subunit beta</fullName>
        <ecNumber evidence="1">6.2.1.5</ecNumber>
    </recommendedName>
    <alternativeName>
        <fullName evidence="1">Succinyl-CoA synthetase subunit beta</fullName>
        <shortName evidence="1">SCS-beta</shortName>
    </alternativeName>
</protein>
<evidence type="ECO:0000255" key="1">
    <source>
        <dbReference type="HAMAP-Rule" id="MF_00558"/>
    </source>
</evidence>
<accession>Q6MGW1</accession>
<proteinExistence type="inferred from homology"/>
<reference key="1">
    <citation type="journal article" date="2004" name="Science">
        <title>A predator unmasked: life cycle of Bdellovibrio bacteriovorus from a genomic perspective.</title>
        <authorList>
            <person name="Rendulic S."/>
            <person name="Jagtap P."/>
            <person name="Rosinus A."/>
            <person name="Eppinger M."/>
            <person name="Baar C."/>
            <person name="Lanz C."/>
            <person name="Keller H."/>
            <person name="Lambert C."/>
            <person name="Evans K.J."/>
            <person name="Goesmann A."/>
            <person name="Meyer F."/>
            <person name="Sockett R.E."/>
            <person name="Schuster S.C."/>
        </authorList>
    </citation>
    <scope>NUCLEOTIDE SEQUENCE [LARGE SCALE GENOMIC DNA]</scope>
    <source>
        <strain>ATCC 15356 / DSM 50701 / NCIMB 9529 / HD100</strain>
    </source>
</reference>
<organism>
    <name type="scientific">Bdellovibrio bacteriovorus (strain ATCC 15356 / DSM 50701 / NCIMB 9529 / HD100)</name>
    <dbReference type="NCBI Taxonomy" id="264462"/>
    <lineage>
        <taxon>Bacteria</taxon>
        <taxon>Pseudomonadati</taxon>
        <taxon>Bdellovibrionota</taxon>
        <taxon>Bdellovibrionia</taxon>
        <taxon>Bdellovibrionales</taxon>
        <taxon>Pseudobdellovibrionaceae</taxon>
        <taxon>Bdellovibrio</taxon>
    </lineage>
</organism>
<keyword id="KW-0067">ATP-binding</keyword>
<keyword id="KW-0436">Ligase</keyword>
<keyword id="KW-0460">Magnesium</keyword>
<keyword id="KW-0479">Metal-binding</keyword>
<keyword id="KW-0547">Nucleotide-binding</keyword>
<keyword id="KW-1185">Reference proteome</keyword>
<keyword id="KW-0816">Tricarboxylic acid cycle</keyword>
<gene>
    <name evidence="1" type="primary">sucC</name>
    <name type="ordered locus">Bd3810</name>
</gene>